<name>ATPF_STRMK</name>
<evidence type="ECO:0000255" key="1">
    <source>
        <dbReference type="HAMAP-Rule" id="MF_01398"/>
    </source>
</evidence>
<organism>
    <name type="scientific">Stenotrophomonas maltophilia (strain K279a)</name>
    <dbReference type="NCBI Taxonomy" id="522373"/>
    <lineage>
        <taxon>Bacteria</taxon>
        <taxon>Pseudomonadati</taxon>
        <taxon>Pseudomonadota</taxon>
        <taxon>Gammaproteobacteria</taxon>
        <taxon>Lysobacterales</taxon>
        <taxon>Lysobacteraceae</taxon>
        <taxon>Stenotrophomonas</taxon>
        <taxon>Stenotrophomonas maltophilia group</taxon>
    </lineage>
</organism>
<dbReference type="EMBL" id="AM743169">
    <property type="protein sequence ID" value="CAQ47506.1"/>
    <property type="molecule type" value="Genomic_DNA"/>
</dbReference>
<dbReference type="RefSeq" id="WP_005419512.1">
    <property type="nucleotide sequence ID" value="NC_010943.1"/>
</dbReference>
<dbReference type="SMR" id="B2FHZ2"/>
<dbReference type="EnsemblBacteria" id="CAQ47506">
    <property type="protein sequence ID" value="CAQ47506"/>
    <property type="gene ID" value="Smlt4115"/>
</dbReference>
<dbReference type="KEGG" id="sml:Smlt4115"/>
<dbReference type="eggNOG" id="COG0711">
    <property type="taxonomic scope" value="Bacteria"/>
</dbReference>
<dbReference type="HOGENOM" id="CLU_079215_4_5_6"/>
<dbReference type="Proteomes" id="UP000008840">
    <property type="component" value="Chromosome"/>
</dbReference>
<dbReference type="GO" id="GO:0005886">
    <property type="term" value="C:plasma membrane"/>
    <property type="evidence" value="ECO:0007669"/>
    <property type="project" value="UniProtKB-SubCell"/>
</dbReference>
<dbReference type="GO" id="GO:0045259">
    <property type="term" value="C:proton-transporting ATP synthase complex"/>
    <property type="evidence" value="ECO:0007669"/>
    <property type="project" value="UniProtKB-KW"/>
</dbReference>
<dbReference type="GO" id="GO:0046933">
    <property type="term" value="F:proton-transporting ATP synthase activity, rotational mechanism"/>
    <property type="evidence" value="ECO:0007669"/>
    <property type="project" value="UniProtKB-UniRule"/>
</dbReference>
<dbReference type="GO" id="GO:0046961">
    <property type="term" value="F:proton-transporting ATPase activity, rotational mechanism"/>
    <property type="evidence" value="ECO:0007669"/>
    <property type="project" value="TreeGrafter"/>
</dbReference>
<dbReference type="CDD" id="cd06503">
    <property type="entry name" value="ATP-synt_Fo_b"/>
    <property type="match status" value="1"/>
</dbReference>
<dbReference type="Gene3D" id="6.10.250.1580">
    <property type="match status" value="1"/>
</dbReference>
<dbReference type="HAMAP" id="MF_01398">
    <property type="entry name" value="ATP_synth_b_bprime"/>
    <property type="match status" value="1"/>
</dbReference>
<dbReference type="InterPro" id="IPR028987">
    <property type="entry name" value="ATP_synth_B-like_membr_sf"/>
</dbReference>
<dbReference type="InterPro" id="IPR002146">
    <property type="entry name" value="ATP_synth_b/b'su_bac/chlpt"/>
</dbReference>
<dbReference type="InterPro" id="IPR005864">
    <property type="entry name" value="ATP_synth_F0_bsu_bac"/>
</dbReference>
<dbReference type="InterPro" id="IPR050059">
    <property type="entry name" value="ATP_synthase_B_chain"/>
</dbReference>
<dbReference type="NCBIfam" id="TIGR01144">
    <property type="entry name" value="ATP_synt_b"/>
    <property type="match status" value="1"/>
</dbReference>
<dbReference type="NCBIfam" id="NF004411">
    <property type="entry name" value="PRK05759.1-2"/>
    <property type="match status" value="1"/>
</dbReference>
<dbReference type="PANTHER" id="PTHR33445:SF1">
    <property type="entry name" value="ATP SYNTHASE SUBUNIT B"/>
    <property type="match status" value="1"/>
</dbReference>
<dbReference type="PANTHER" id="PTHR33445">
    <property type="entry name" value="ATP SYNTHASE SUBUNIT B', CHLOROPLASTIC"/>
    <property type="match status" value="1"/>
</dbReference>
<dbReference type="Pfam" id="PF00430">
    <property type="entry name" value="ATP-synt_B"/>
    <property type="match status" value="1"/>
</dbReference>
<dbReference type="SUPFAM" id="SSF81573">
    <property type="entry name" value="F1F0 ATP synthase subunit B, membrane domain"/>
    <property type="match status" value="1"/>
</dbReference>
<keyword id="KW-0066">ATP synthesis</keyword>
<keyword id="KW-1003">Cell membrane</keyword>
<keyword id="KW-0138">CF(0)</keyword>
<keyword id="KW-0375">Hydrogen ion transport</keyword>
<keyword id="KW-0406">Ion transport</keyword>
<keyword id="KW-0472">Membrane</keyword>
<keyword id="KW-1185">Reference proteome</keyword>
<keyword id="KW-0812">Transmembrane</keyword>
<keyword id="KW-1133">Transmembrane helix</keyword>
<keyword id="KW-0813">Transport</keyword>
<comment type="function">
    <text evidence="1">F(1)F(0) ATP synthase produces ATP from ADP in the presence of a proton or sodium gradient. F-type ATPases consist of two structural domains, F(1) containing the extramembraneous catalytic core and F(0) containing the membrane proton channel, linked together by a central stalk and a peripheral stalk. During catalysis, ATP synthesis in the catalytic domain of F(1) is coupled via a rotary mechanism of the central stalk subunits to proton translocation.</text>
</comment>
<comment type="function">
    <text evidence="1">Component of the F(0) channel, it forms part of the peripheral stalk, linking F(1) to F(0).</text>
</comment>
<comment type="subunit">
    <text evidence="1">F-type ATPases have 2 components, F(1) - the catalytic core - and F(0) - the membrane proton channel. F(1) has five subunits: alpha(3), beta(3), gamma(1), delta(1), epsilon(1). F(0) has three main subunits: a(1), b(2) and c(10-14). The alpha and beta chains form an alternating ring which encloses part of the gamma chain. F(1) is attached to F(0) by a central stalk formed by the gamma and epsilon chains, while a peripheral stalk is formed by the delta and b chains.</text>
</comment>
<comment type="subcellular location">
    <subcellularLocation>
        <location evidence="1">Cell membrane</location>
        <topology evidence="1">Single-pass membrane protein</topology>
    </subcellularLocation>
</comment>
<comment type="similarity">
    <text evidence="1">Belongs to the ATPase B chain family.</text>
</comment>
<gene>
    <name evidence="1" type="primary">atpF</name>
    <name type="ordered locus">Smlt4115</name>
</gene>
<accession>B2FHZ2</accession>
<feature type="chain" id="PRO_0000368790" description="ATP synthase subunit b">
    <location>
        <begin position="1"/>
        <end position="156"/>
    </location>
</feature>
<feature type="transmembrane region" description="Helical" evidence="1">
    <location>
        <begin position="3"/>
        <end position="23"/>
    </location>
</feature>
<sequence length="156" mass="17129">MNINFTLLAQALAFAGLIWIIATKIWPPLMNAIEERQQKIAEGLAAADRSQKDLAQAQEKVNEALKEARTKANEIIDQAHARANQIVDAARNEAITEATRQKELAQAEIDAAANRAREDLRKQVSALAVTGAEKLLKREIDANAHKALLDELASEI</sequence>
<reference key="1">
    <citation type="journal article" date="2008" name="Genome Biol.">
        <title>The complete genome, comparative and functional analysis of Stenotrophomonas maltophilia reveals an organism heavily shielded by drug resistance determinants.</title>
        <authorList>
            <person name="Crossman L.C."/>
            <person name="Gould V.C."/>
            <person name="Dow J.M."/>
            <person name="Vernikos G.S."/>
            <person name="Okazaki A."/>
            <person name="Sebaihia M."/>
            <person name="Saunders D."/>
            <person name="Arrowsmith C."/>
            <person name="Carver T."/>
            <person name="Peters N."/>
            <person name="Adlem E."/>
            <person name="Kerhornou A."/>
            <person name="Lord A."/>
            <person name="Murphy L."/>
            <person name="Seeger K."/>
            <person name="Squares R."/>
            <person name="Rutter S."/>
            <person name="Quail M.A."/>
            <person name="Rajandream M.A."/>
            <person name="Harris D."/>
            <person name="Churcher C."/>
            <person name="Bentley S.D."/>
            <person name="Parkhill J."/>
            <person name="Thomson N.R."/>
            <person name="Avison M.B."/>
        </authorList>
    </citation>
    <scope>NUCLEOTIDE SEQUENCE [LARGE SCALE GENOMIC DNA]</scope>
    <source>
        <strain>K279a</strain>
    </source>
</reference>
<protein>
    <recommendedName>
        <fullName evidence="1">ATP synthase subunit b</fullName>
    </recommendedName>
    <alternativeName>
        <fullName evidence="1">ATP synthase F(0) sector subunit b</fullName>
    </alternativeName>
    <alternativeName>
        <fullName evidence="1">ATPase subunit I</fullName>
    </alternativeName>
    <alternativeName>
        <fullName evidence="1">F-type ATPase subunit b</fullName>
        <shortName evidence="1">F-ATPase subunit b</shortName>
    </alternativeName>
</protein>
<proteinExistence type="inferred from homology"/>